<feature type="chain" id="PRO_0000189223" description="4-diphosphocytidyl-2-C-methyl-D-erythritol kinase">
    <location>
        <begin position="1"/>
        <end position="313"/>
    </location>
</feature>
<feature type="active site" evidence="1">
    <location>
        <position position="29"/>
    </location>
</feature>
<feature type="active site" evidence="1">
    <location>
        <position position="155"/>
    </location>
</feature>
<feature type="binding site" evidence="1">
    <location>
        <begin position="113"/>
        <end position="123"/>
    </location>
    <ligand>
        <name>ATP</name>
        <dbReference type="ChEBI" id="CHEBI:30616"/>
    </ligand>
</feature>
<keyword id="KW-0067">ATP-binding</keyword>
<keyword id="KW-0414">Isoprene biosynthesis</keyword>
<keyword id="KW-0418">Kinase</keyword>
<keyword id="KW-0547">Nucleotide-binding</keyword>
<keyword id="KW-1185">Reference proteome</keyword>
<keyword id="KW-0808">Transferase</keyword>
<protein>
    <recommendedName>
        <fullName evidence="1">4-diphosphocytidyl-2-C-methyl-D-erythritol kinase</fullName>
        <shortName evidence="1">CMK</shortName>
        <ecNumber evidence="1">2.7.1.148</ecNumber>
    </recommendedName>
    <alternativeName>
        <fullName evidence="1">4-(cytidine-5'-diphospho)-2-C-methyl-D-erythritol kinase</fullName>
    </alternativeName>
</protein>
<accession>P45271</accession>
<comment type="function">
    <text evidence="1">Catalyzes the phosphorylation of the position 2 hydroxy group of 4-diphosphocytidyl-2C-methyl-D-erythritol.</text>
</comment>
<comment type="catalytic activity">
    <reaction evidence="1">
        <text>4-CDP-2-C-methyl-D-erythritol + ATP = 4-CDP-2-C-methyl-D-erythritol 2-phosphate + ADP + H(+)</text>
        <dbReference type="Rhea" id="RHEA:18437"/>
        <dbReference type="ChEBI" id="CHEBI:15378"/>
        <dbReference type="ChEBI" id="CHEBI:30616"/>
        <dbReference type="ChEBI" id="CHEBI:57823"/>
        <dbReference type="ChEBI" id="CHEBI:57919"/>
        <dbReference type="ChEBI" id="CHEBI:456216"/>
        <dbReference type="EC" id="2.7.1.148"/>
    </reaction>
</comment>
<comment type="pathway">
    <text evidence="1">Isoprenoid biosynthesis; isopentenyl diphosphate biosynthesis via DXP pathway; isopentenyl diphosphate from 1-deoxy-D-xylulose 5-phosphate: step 3/6.</text>
</comment>
<comment type="similarity">
    <text evidence="1">Belongs to the GHMP kinase family. IspE subfamily.</text>
</comment>
<dbReference type="EC" id="2.7.1.148" evidence="1"/>
<dbReference type="EMBL" id="L42023">
    <property type="protein sequence ID" value="AAC23252.1"/>
    <property type="molecule type" value="Genomic_DNA"/>
</dbReference>
<dbReference type="PIR" id="A64173">
    <property type="entry name" value="A64173"/>
</dbReference>
<dbReference type="RefSeq" id="NP_439750.1">
    <property type="nucleotide sequence ID" value="NC_000907.1"/>
</dbReference>
<dbReference type="SMR" id="P45271"/>
<dbReference type="STRING" id="71421.HI_1608"/>
<dbReference type="EnsemblBacteria" id="AAC23252">
    <property type="protein sequence ID" value="AAC23252"/>
    <property type="gene ID" value="HI_1608"/>
</dbReference>
<dbReference type="KEGG" id="hin:HI_1608"/>
<dbReference type="PATRIC" id="fig|71421.8.peg.1681"/>
<dbReference type="eggNOG" id="COG1947">
    <property type="taxonomic scope" value="Bacteria"/>
</dbReference>
<dbReference type="HOGENOM" id="CLU_053057_3_0_6"/>
<dbReference type="OrthoDB" id="9809438at2"/>
<dbReference type="PhylomeDB" id="P45271"/>
<dbReference type="BioCyc" id="HINF71421:G1GJ1-1621-MONOMER"/>
<dbReference type="UniPathway" id="UPA00056">
    <property type="reaction ID" value="UER00094"/>
</dbReference>
<dbReference type="Proteomes" id="UP000000579">
    <property type="component" value="Chromosome"/>
</dbReference>
<dbReference type="GO" id="GO:0050515">
    <property type="term" value="F:4-(cytidine 5'-diphospho)-2-C-methyl-D-erythritol kinase activity"/>
    <property type="evidence" value="ECO:0000318"/>
    <property type="project" value="GO_Central"/>
</dbReference>
<dbReference type="GO" id="GO:0005524">
    <property type="term" value="F:ATP binding"/>
    <property type="evidence" value="ECO:0007669"/>
    <property type="project" value="UniProtKB-UniRule"/>
</dbReference>
<dbReference type="GO" id="GO:0019288">
    <property type="term" value="P:isopentenyl diphosphate biosynthetic process, methylerythritol 4-phosphate pathway"/>
    <property type="evidence" value="ECO:0007669"/>
    <property type="project" value="UniProtKB-UniRule"/>
</dbReference>
<dbReference type="GO" id="GO:0016114">
    <property type="term" value="P:terpenoid biosynthetic process"/>
    <property type="evidence" value="ECO:0007669"/>
    <property type="project" value="InterPro"/>
</dbReference>
<dbReference type="FunFam" id="3.30.230.10:FF:000022">
    <property type="entry name" value="4-diphosphocytidyl-2-C-methyl-D-erythritol kinase"/>
    <property type="match status" value="1"/>
</dbReference>
<dbReference type="FunFam" id="3.30.70.890:FF:000004">
    <property type="entry name" value="4-diphosphocytidyl-2-C-methyl-D-erythritol kinase"/>
    <property type="match status" value="1"/>
</dbReference>
<dbReference type="Gene3D" id="3.30.230.10">
    <property type="match status" value="1"/>
</dbReference>
<dbReference type="Gene3D" id="3.30.70.890">
    <property type="entry name" value="GHMP kinase, C-terminal domain"/>
    <property type="match status" value="1"/>
</dbReference>
<dbReference type="HAMAP" id="MF_00061">
    <property type="entry name" value="IspE"/>
    <property type="match status" value="1"/>
</dbReference>
<dbReference type="InterPro" id="IPR013750">
    <property type="entry name" value="GHMP_kinase_C_dom"/>
</dbReference>
<dbReference type="InterPro" id="IPR036554">
    <property type="entry name" value="GHMP_kinase_C_sf"/>
</dbReference>
<dbReference type="InterPro" id="IPR006204">
    <property type="entry name" value="GHMP_kinase_N_dom"/>
</dbReference>
<dbReference type="InterPro" id="IPR004424">
    <property type="entry name" value="IspE"/>
</dbReference>
<dbReference type="InterPro" id="IPR020568">
    <property type="entry name" value="Ribosomal_Su5_D2-typ_SF"/>
</dbReference>
<dbReference type="InterPro" id="IPR014721">
    <property type="entry name" value="Ribsml_uS5_D2-typ_fold_subgr"/>
</dbReference>
<dbReference type="NCBIfam" id="TIGR00154">
    <property type="entry name" value="ispE"/>
    <property type="match status" value="1"/>
</dbReference>
<dbReference type="PANTHER" id="PTHR43527">
    <property type="entry name" value="4-DIPHOSPHOCYTIDYL-2-C-METHYL-D-ERYTHRITOL KINASE, CHLOROPLASTIC"/>
    <property type="match status" value="1"/>
</dbReference>
<dbReference type="PANTHER" id="PTHR43527:SF2">
    <property type="entry name" value="4-DIPHOSPHOCYTIDYL-2-C-METHYL-D-ERYTHRITOL KINASE, CHLOROPLASTIC"/>
    <property type="match status" value="1"/>
</dbReference>
<dbReference type="Pfam" id="PF08544">
    <property type="entry name" value="GHMP_kinases_C"/>
    <property type="match status" value="1"/>
</dbReference>
<dbReference type="Pfam" id="PF00288">
    <property type="entry name" value="GHMP_kinases_N"/>
    <property type="match status" value="1"/>
</dbReference>
<dbReference type="PIRSF" id="PIRSF010376">
    <property type="entry name" value="IspE"/>
    <property type="match status" value="1"/>
</dbReference>
<dbReference type="SUPFAM" id="SSF55060">
    <property type="entry name" value="GHMP Kinase, C-terminal domain"/>
    <property type="match status" value="1"/>
</dbReference>
<dbReference type="SUPFAM" id="SSF54211">
    <property type="entry name" value="Ribosomal protein S5 domain 2-like"/>
    <property type="match status" value="1"/>
</dbReference>
<organism>
    <name type="scientific">Haemophilus influenzae (strain ATCC 51907 / DSM 11121 / KW20 / Rd)</name>
    <dbReference type="NCBI Taxonomy" id="71421"/>
    <lineage>
        <taxon>Bacteria</taxon>
        <taxon>Pseudomonadati</taxon>
        <taxon>Pseudomonadota</taxon>
        <taxon>Gammaproteobacteria</taxon>
        <taxon>Pasteurellales</taxon>
        <taxon>Pasteurellaceae</taxon>
        <taxon>Haemophilus</taxon>
    </lineage>
</organism>
<reference key="1">
    <citation type="journal article" date="1995" name="Science">
        <title>Whole-genome random sequencing and assembly of Haemophilus influenzae Rd.</title>
        <authorList>
            <person name="Fleischmann R.D."/>
            <person name="Adams M.D."/>
            <person name="White O."/>
            <person name="Clayton R.A."/>
            <person name="Kirkness E.F."/>
            <person name="Kerlavage A.R."/>
            <person name="Bult C.J."/>
            <person name="Tomb J.-F."/>
            <person name="Dougherty B.A."/>
            <person name="Merrick J.M."/>
            <person name="McKenney K."/>
            <person name="Sutton G.G."/>
            <person name="FitzHugh W."/>
            <person name="Fields C.A."/>
            <person name="Gocayne J.D."/>
            <person name="Scott J.D."/>
            <person name="Shirley R."/>
            <person name="Liu L.-I."/>
            <person name="Glodek A."/>
            <person name="Kelley J.M."/>
            <person name="Weidman J.F."/>
            <person name="Phillips C.A."/>
            <person name="Spriggs T."/>
            <person name="Hedblom E."/>
            <person name="Cotton M.D."/>
            <person name="Utterback T.R."/>
            <person name="Hanna M.C."/>
            <person name="Nguyen D.T."/>
            <person name="Saudek D.M."/>
            <person name="Brandon R.C."/>
            <person name="Fine L.D."/>
            <person name="Fritchman J.L."/>
            <person name="Fuhrmann J.L."/>
            <person name="Geoghagen N.S.M."/>
            <person name="Gnehm C.L."/>
            <person name="McDonald L.A."/>
            <person name="Small K.V."/>
            <person name="Fraser C.M."/>
            <person name="Smith H.O."/>
            <person name="Venter J.C."/>
        </authorList>
    </citation>
    <scope>NUCLEOTIDE SEQUENCE [LARGE SCALE GENOMIC DNA]</scope>
    <source>
        <strain>ATCC 51907 / DSM 11121 / KW20 / Rd</strain>
    </source>
</reference>
<sequence>MKSHQFSTALCQNTTESNGQPLRFPSPAKLNLFLYINGKFPNGYHELQTLFQFLDFGDWLDISIREQDNQIVLTPEIPNLKTENNLIYRAAKLLQEKANIQLGANIHLDKILPMGGGVGGGSSNAATALVSLNYLWQANLSIDELAKLGLTLGADVPIFVHGHAAFAEGVGEKITYCEPAEKWFVILKPDDSISTAVIFQDPNLPRNTPKKSLAQLLSEPYKNDCEKVVINHYSNVEKALNWLLQYAPARLTGTGACVFAEFDHEAEAQAVFRQKPEAFFGFVAKGLNVSPLHAMLKQLSSTHTHRQSKPEVL</sequence>
<gene>
    <name evidence="1" type="primary">ispE</name>
    <name type="ordered locus">HI_1608</name>
</gene>
<name>ISPE_HAEIN</name>
<proteinExistence type="inferred from homology"/>
<evidence type="ECO:0000255" key="1">
    <source>
        <dbReference type="HAMAP-Rule" id="MF_00061"/>
    </source>
</evidence>